<sequence length="171" mass="19132">MPLLDSFCVDHTIMNAPGVRLAKTMDTPKGDKICVFDLRFCKPNETMMPERGTHTLEHLFAGFMRDHLNREGVEIIDISPMGCRTGFYMSVIGEPSSQEVANAWEASMKDIINVLSQSDIPELNEYQCGSYKMHSLKEAHEIANNVLKAGIGIIDNESIKLDLHAKGLKKH</sequence>
<protein>
    <recommendedName>
        <fullName evidence="1">S-ribosylhomocysteine lyase</fullName>
        <ecNumber evidence="1">4.4.1.21</ecNumber>
    </recommendedName>
    <alternativeName>
        <fullName evidence="1">AI-2 synthesis protein</fullName>
    </alternativeName>
    <alternativeName>
        <fullName evidence="1">Autoinducer-2 production protein LuxS</fullName>
    </alternativeName>
</protein>
<comment type="function">
    <text evidence="1">Involved in the synthesis of autoinducer 2 (AI-2) which is secreted by bacteria and is used to communicate both the cell density and the metabolic potential of the environment. The regulation of gene expression in response to changes in cell density is called quorum sensing. Catalyzes the transformation of S-ribosylhomocysteine (RHC) to homocysteine (HC) and 4,5-dihydroxy-2,3-pentadione (DPD).</text>
</comment>
<comment type="catalytic activity">
    <reaction evidence="1">
        <text>S-(5-deoxy-D-ribos-5-yl)-L-homocysteine = (S)-4,5-dihydroxypentane-2,3-dione + L-homocysteine</text>
        <dbReference type="Rhea" id="RHEA:17753"/>
        <dbReference type="ChEBI" id="CHEBI:29484"/>
        <dbReference type="ChEBI" id="CHEBI:58195"/>
        <dbReference type="ChEBI" id="CHEBI:58199"/>
        <dbReference type="EC" id="4.4.1.21"/>
    </reaction>
</comment>
<comment type="cofactor">
    <cofactor evidence="1">
        <name>Fe cation</name>
        <dbReference type="ChEBI" id="CHEBI:24875"/>
    </cofactor>
    <text evidence="1">Binds 1 Fe cation per subunit.</text>
</comment>
<comment type="subunit">
    <text evidence="1">Homodimer.</text>
</comment>
<comment type="similarity">
    <text evidence="1">Belongs to the LuxS family.</text>
</comment>
<name>LUXS_CAMC5</name>
<organism>
    <name type="scientific">Campylobacter curvus (strain 525.92)</name>
    <dbReference type="NCBI Taxonomy" id="360105"/>
    <lineage>
        <taxon>Bacteria</taxon>
        <taxon>Pseudomonadati</taxon>
        <taxon>Campylobacterota</taxon>
        <taxon>Epsilonproteobacteria</taxon>
        <taxon>Campylobacterales</taxon>
        <taxon>Campylobacteraceae</taxon>
        <taxon>Campylobacter</taxon>
    </lineage>
</organism>
<reference key="1">
    <citation type="submission" date="2007-07" db="EMBL/GenBank/DDBJ databases">
        <title>Genome sequence of Campylobacter curvus 525.92 isolated from human feces.</title>
        <authorList>
            <person name="Fouts D.E."/>
            <person name="Mongodin E.F."/>
            <person name="Puiu D."/>
            <person name="Sebastian Y."/>
            <person name="Miller W.G."/>
            <person name="Mandrell R.E."/>
            <person name="Lastovica A.J."/>
            <person name="Nelson K.E."/>
        </authorList>
    </citation>
    <scope>NUCLEOTIDE SEQUENCE [LARGE SCALE GENOMIC DNA]</scope>
    <source>
        <strain>525.92</strain>
    </source>
</reference>
<dbReference type="EC" id="4.4.1.21" evidence="1"/>
<dbReference type="EMBL" id="CP000767">
    <property type="protein sequence ID" value="EAT99653.1"/>
    <property type="molecule type" value="Genomic_DNA"/>
</dbReference>
<dbReference type="RefSeq" id="WP_011991856.1">
    <property type="nucleotide sequence ID" value="NC_009715.2"/>
</dbReference>
<dbReference type="SMR" id="A7GWQ0"/>
<dbReference type="STRING" id="360105.CCV52592_1053"/>
<dbReference type="KEGG" id="ccv:CCV52592_1053"/>
<dbReference type="HOGENOM" id="CLU_107531_2_0_7"/>
<dbReference type="OrthoDB" id="9788129at2"/>
<dbReference type="Proteomes" id="UP000006380">
    <property type="component" value="Chromosome"/>
</dbReference>
<dbReference type="GO" id="GO:0005506">
    <property type="term" value="F:iron ion binding"/>
    <property type="evidence" value="ECO:0007669"/>
    <property type="project" value="InterPro"/>
</dbReference>
<dbReference type="GO" id="GO:0043768">
    <property type="term" value="F:S-ribosylhomocysteine lyase activity"/>
    <property type="evidence" value="ECO:0007669"/>
    <property type="project" value="UniProtKB-UniRule"/>
</dbReference>
<dbReference type="GO" id="GO:0009372">
    <property type="term" value="P:quorum sensing"/>
    <property type="evidence" value="ECO:0007669"/>
    <property type="project" value="UniProtKB-UniRule"/>
</dbReference>
<dbReference type="Gene3D" id="3.30.1360.80">
    <property type="entry name" value="S-ribosylhomocysteinase (LuxS)"/>
    <property type="match status" value="1"/>
</dbReference>
<dbReference type="HAMAP" id="MF_00091">
    <property type="entry name" value="LuxS"/>
    <property type="match status" value="1"/>
</dbReference>
<dbReference type="InterPro" id="IPR037005">
    <property type="entry name" value="LuxS_sf"/>
</dbReference>
<dbReference type="InterPro" id="IPR011249">
    <property type="entry name" value="Metalloenz_LuxS/M16"/>
</dbReference>
<dbReference type="InterPro" id="IPR003815">
    <property type="entry name" value="S-ribosylhomocysteinase"/>
</dbReference>
<dbReference type="NCBIfam" id="NF002602">
    <property type="entry name" value="PRK02260.1-2"/>
    <property type="match status" value="1"/>
</dbReference>
<dbReference type="PANTHER" id="PTHR35799">
    <property type="entry name" value="S-RIBOSYLHOMOCYSTEINE LYASE"/>
    <property type="match status" value="1"/>
</dbReference>
<dbReference type="PANTHER" id="PTHR35799:SF1">
    <property type="entry name" value="S-RIBOSYLHOMOCYSTEINE LYASE"/>
    <property type="match status" value="1"/>
</dbReference>
<dbReference type="Pfam" id="PF02664">
    <property type="entry name" value="LuxS"/>
    <property type="match status" value="1"/>
</dbReference>
<dbReference type="PIRSF" id="PIRSF006160">
    <property type="entry name" value="AI2"/>
    <property type="match status" value="1"/>
</dbReference>
<dbReference type="PRINTS" id="PR01487">
    <property type="entry name" value="LUXSPROTEIN"/>
</dbReference>
<dbReference type="SUPFAM" id="SSF63411">
    <property type="entry name" value="LuxS/MPP-like metallohydrolase"/>
    <property type="match status" value="1"/>
</dbReference>
<gene>
    <name evidence="1" type="primary">luxS</name>
    <name type="ordered locus">Ccur92_03380</name>
    <name type="ORF">CCV52592_1053</name>
</gene>
<proteinExistence type="inferred from homology"/>
<feature type="chain" id="PRO_1000004839" description="S-ribosylhomocysteine lyase">
    <location>
        <begin position="1"/>
        <end position="171"/>
    </location>
</feature>
<feature type="binding site" evidence="1">
    <location>
        <position position="54"/>
    </location>
    <ligand>
        <name>Fe cation</name>
        <dbReference type="ChEBI" id="CHEBI:24875"/>
    </ligand>
</feature>
<feature type="binding site" evidence="1">
    <location>
        <position position="58"/>
    </location>
    <ligand>
        <name>Fe cation</name>
        <dbReference type="ChEBI" id="CHEBI:24875"/>
    </ligand>
</feature>
<feature type="binding site" evidence="1">
    <location>
        <position position="128"/>
    </location>
    <ligand>
        <name>Fe cation</name>
        <dbReference type="ChEBI" id="CHEBI:24875"/>
    </ligand>
</feature>
<accession>A7GWQ0</accession>
<evidence type="ECO:0000255" key="1">
    <source>
        <dbReference type="HAMAP-Rule" id="MF_00091"/>
    </source>
</evidence>
<keyword id="KW-0071">Autoinducer synthesis</keyword>
<keyword id="KW-0408">Iron</keyword>
<keyword id="KW-0456">Lyase</keyword>
<keyword id="KW-0479">Metal-binding</keyword>
<keyword id="KW-0673">Quorum sensing</keyword>
<keyword id="KW-1185">Reference proteome</keyword>